<organism>
    <name type="scientific">Paenibacillus polymyxa</name>
    <name type="common">Bacillus polymyxa</name>
    <dbReference type="NCBI Taxonomy" id="1406"/>
    <lineage>
        <taxon>Bacteria</taxon>
        <taxon>Bacillati</taxon>
        <taxon>Bacillota</taxon>
        <taxon>Bacilli</taxon>
        <taxon>Bacillales</taxon>
        <taxon>Paenibacillaceae</taxon>
        <taxon>Paenibacillus</taxon>
    </lineage>
</organism>
<dbReference type="EC" id="4.2.1.33"/>
<dbReference type="EMBL" id="AB003153">
    <property type="protein sequence ID" value="BAA90647.1"/>
    <property type="molecule type" value="Genomic_DNA"/>
</dbReference>
<dbReference type="SMR" id="Q9LCR5"/>
<dbReference type="eggNOG" id="COG0066">
    <property type="taxonomic scope" value="Bacteria"/>
</dbReference>
<dbReference type="UniPathway" id="UPA00048">
    <property type="reaction ID" value="UER00071"/>
</dbReference>
<dbReference type="GO" id="GO:0009316">
    <property type="term" value="C:3-isopropylmalate dehydratase complex"/>
    <property type="evidence" value="ECO:0007669"/>
    <property type="project" value="InterPro"/>
</dbReference>
<dbReference type="GO" id="GO:0003861">
    <property type="term" value="F:3-isopropylmalate dehydratase activity"/>
    <property type="evidence" value="ECO:0007669"/>
    <property type="project" value="UniProtKB-EC"/>
</dbReference>
<dbReference type="GO" id="GO:0009098">
    <property type="term" value="P:L-leucine biosynthetic process"/>
    <property type="evidence" value="ECO:0007669"/>
    <property type="project" value="UniProtKB-UniPathway"/>
</dbReference>
<dbReference type="CDD" id="cd01577">
    <property type="entry name" value="IPMI_Swivel"/>
    <property type="match status" value="1"/>
</dbReference>
<dbReference type="FunFam" id="3.20.19.10:FF:000003">
    <property type="entry name" value="3-isopropylmalate dehydratase small subunit"/>
    <property type="match status" value="1"/>
</dbReference>
<dbReference type="Gene3D" id="3.20.19.10">
    <property type="entry name" value="Aconitase, domain 4"/>
    <property type="match status" value="1"/>
</dbReference>
<dbReference type="InterPro" id="IPR004431">
    <property type="entry name" value="3-IsopropMal_deHydase_ssu"/>
</dbReference>
<dbReference type="InterPro" id="IPR015928">
    <property type="entry name" value="Aconitase/3IPM_dehydase_swvl"/>
</dbReference>
<dbReference type="InterPro" id="IPR000573">
    <property type="entry name" value="AconitaseA/IPMdHydase_ssu_swvl"/>
</dbReference>
<dbReference type="InterPro" id="IPR033940">
    <property type="entry name" value="IPMI_Swivel"/>
</dbReference>
<dbReference type="InterPro" id="IPR050075">
    <property type="entry name" value="LeuD"/>
</dbReference>
<dbReference type="NCBIfam" id="TIGR00171">
    <property type="entry name" value="leuD"/>
    <property type="match status" value="1"/>
</dbReference>
<dbReference type="NCBIfam" id="NF002458">
    <property type="entry name" value="PRK01641.1"/>
    <property type="match status" value="1"/>
</dbReference>
<dbReference type="PANTHER" id="PTHR43345:SF5">
    <property type="entry name" value="3-ISOPROPYLMALATE DEHYDRATASE SMALL SUBUNIT"/>
    <property type="match status" value="1"/>
</dbReference>
<dbReference type="PANTHER" id="PTHR43345">
    <property type="entry name" value="3-ISOPROPYLMALATE DEHYDRATASE SMALL SUBUNIT 2-RELATED-RELATED"/>
    <property type="match status" value="1"/>
</dbReference>
<dbReference type="Pfam" id="PF00694">
    <property type="entry name" value="Aconitase_C"/>
    <property type="match status" value="1"/>
</dbReference>
<dbReference type="SUPFAM" id="SSF52016">
    <property type="entry name" value="LeuD/IlvD-like"/>
    <property type="match status" value="1"/>
</dbReference>
<evidence type="ECO:0000250" key="1"/>
<evidence type="ECO:0000305" key="2"/>
<feature type="chain" id="PRO_0000141851" description="3-isopropylmalate dehydratase small subunit">
    <location>
        <begin position="1" status="less than"/>
        <end position="178"/>
    </location>
</feature>
<feature type="non-terminal residue">
    <location>
        <position position="1"/>
    </location>
</feature>
<protein>
    <recommendedName>
        <fullName>3-isopropylmalate dehydratase small subunit</fullName>
        <ecNumber>4.2.1.33</ecNumber>
    </recommendedName>
    <alternativeName>
        <fullName>Alpha-IPM isomerase</fullName>
        <shortName>IPMI</shortName>
    </alternativeName>
    <alternativeName>
        <fullName>Isopropylmalate isomerase</fullName>
    </alternativeName>
</protein>
<keyword id="KW-0028">Amino-acid biosynthesis</keyword>
<keyword id="KW-0100">Branched-chain amino acid biosynthesis</keyword>
<keyword id="KW-0432">Leucine biosynthesis</keyword>
<keyword id="KW-0456">Lyase</keyword>
<gene>
    <name type="primary">leuD</name>
</gene>
<reference key="1">
    <citation type="journal article" date="1999" name="Mol. Gen. Genet.">
        <title>Cloning and expression of two autolysin genes, cwIU and cwIV, which are tandemly arranged on the chromosome of Bacillus polymyxa var. colistinus.</title>
        <authorList>
            <person name="Ishikawa S."/>
            <person name="Kawahara S."/>
            <person name="Sekiguchi J."/>
        </authorList>
    </citation>
    <scope>NUCLEOTIDE SEQUENCE [GENOMIC DNA]</scope>
</reference>
<sequence>AIIPKQFLKRIERTGFGQFLFYEWRFDEAGNINPEFEPNKPRYAGASVLISRANFGCGSSREHAPWAIMDYGFRCVIAPSFADIFYNNCFKNGILPIKLSEEQVEDLFQRTAKHDNYQLNVDLNEKTITDDYGLRIEFDLDEHRRQFLLQGLDDIGLTLQHESEILAYEQKRAAKQGA</sequence>
<comment type="function">
    <text evidence="1">Catalyzes the isomerization between 2-isopropylmalate and 3-isopropylmalate, via the formation of 2-isopropylmaleate.</text>
</comment>
<comment type="catalytic activity">
    <reaction>
        <text>(2R,3S)-3-isopropylmalate = (2S)-2-isopropylmalate</text>
        <dbReference type="Rhea" id="RHEA:32287"/>
        <dbReference type="ChEBI" id="CHEBI:1178"/>
        <dbReference type="ChEBI" id="CHEBI:35121"/>
        <dbReference type="EC" id="4.2.1.33"/>
    </reaction>
</comment>
<comment type="pathway">
    <text>Amino-acid biosynthesis; L-leucine biosynthesis; L-leucine from 3-methyl-2-oxobutanoate: step 2/4.</text>
</comment>
<comment type="subunit">
    <text evidence="1">Heterodimer of LeuC and LeuD.</text>
</comment>
<comment type="similarity">
    <text evidence="2">Belongs to the LeuD family. LeuD type 1 subfamily.</text>
</comment>
<accession>Q9LCR5</accession>
<proteinExistence type="inferred from homology"/>
<name>LEUD_PAEPO</name>